<proteinExistence type="predicted"/>
<gene>
    <name type="ordered locus">MT0517</name>
</gene>
<comment type="subcellular location">
    <subcellularLocation>
        <location evidence="3">Cell membrane</location>
        <topology evidence="3">Multi-pass membrane protein</topology>
    </subcellularLocation>
</comment>
<comment type="similarity">
    <text evidence="3">To M.leprae ML2433.</text>
</comment>
<protein>
    <recommendedName>
        <fullName>Uncharacterized protein MT0517</fullName>
    </recommendedName>
</protein>
<sequence length="310" mass="33092">MTGPHPETESSGNRQISVAELLARQGVTGAPARRRRRRRGDSDAITVAELTGEIPIIRDDHHHAGPDAHASQSPAANGRVQVGEAAPQSPAEPVAEQVAEEPTRTVYWSQPEPRWPKSPPQDRRESGPELSEYPRPLRHTHSDRAPAGPPSGAEHMSPDPVEHYPDLWVDVLDTEVGEAEAETEVREAQPGRGERHAAAAAAGTDVEGDGAAEARVARRALDVVPTLWRGALVVLQSILAVAFGAGLFIAFDQLWRWNSIVALVLSVMVILGLVVSVRAVRKTEDIASTLIAVAVGALITLGPLALLQSG</sequence>
<organism>
    <name type="scientific">Mycobacterium tuberculosis (strain CDC 1551 / Oshkosh)</name>
    <dbReference type="NCBI Taxonomy" id="83331"/>
    <lineage>
        <taxon>Bacteria</taxon>
        <taxon>Bacillati</taxon>
        <taxon>Actinomycetota</taxon>
        <taxon>Actinomycetes</taxon>
        <taxon>Mycobacteriales</taxon>
        <taxon>Mycobacteriaceae</taxon>
        <taxon>Mycobacterium</taxon>
        <taxon>Mycobacterium tuberculosis complex</taxon>
    </lineage>
</organism>
<accession>P9WKU2</accession>
<accession>L0T6V3</accession>
<accession>P64715</accession>
<accession>Q11162</accession>
<reference key="1">
    <citation type="journal article" date="2002" name="J. Bacteriol.">
        <title>Whole-genome comparison of Mycobacterium tuberculosis clinical and laboratory strains.</title>
        <authorList>
            <person name="Fleischmann R.D."/>
            <person name="Alland D."/>
            <person name="Eisen J.A."/>
            <person name="Carpenter L."/>
            <person name="White O."/>
            <person name="Peterson J.D."/>
            <person name="DeBoy R.T."/>
            <person name="Dodson R.J."/>
            <person name="Gwinn M.L."/>
            <person name="Haft D.H."/>
            <person name="Hickey E.K."/>
            <person name="Kolonay J.F."/>
            <person name="Nelson W.C."/>
            <person name="Umayam L.A."/>
            <person name="Ermolaeva M.D."/>
            <person name="Salzberg S.L."/>
            <person name="Delcher A."/>
            <person name="Utterback T.R."/>
            <person name="Weidman J.F."/>
            <person name="Khouri H.M."/>
            <person name="Gill J."/>
            <person name="Mikula A."/>
            <person name="Bishai W."/>
            <person name="Jacobs W.R. Jr."/>
            <person name="Venter J.C."/>
            <person name="Fraser C.M."/>
        </authorList>
    </citation>
    <scope>NUCLEOTIDE SEQUENCE [LARGE SCALE GENOMIC DNA]</scope>
    <source>
        <strain>CDC 1551 / Oshkosh</strain>
    </source>
</reference>
<name>Y497_MYCTO</name>
<feature type="chain" id="PRO_0000427594" description="Uncharacterized protein MT0517">
    <location>
        <begin position="1"/>
        <end position="310"/>
    </location>
</feature>
<feature type="transmembrane region" description="Helical" evidence="1">
    <location>
        <begin position="231"/>
        <end position="251"/>
    </location>
</feature>
<feature type="transmembrane region" description="Helical" evidence="1">
    <location>
        <begin position="257"/>
        <end position="277"/>
    </location>
</feature>
<feature type="transmembrane region" description="Helical" evidence="1">
    <location>
        <begin position="286"/>
        <end position="306"/>
    </location>
</feature>
<feature type="region of interest" description="Disordered" evidence="2">
    <location>
        <begin position="22"/>
        <end position="163"/>
    </location>
</feature>
<feature type="region of interest" description="Disordered" evidence="2">
    <location>
        <begin position="178"/>
        <end position="209"/>
    </location>
</feature>
<feature type="compositionally biased region" description="Basic and acidic residues" evidence="2">
    <location>
        <begin position="56"/>
        <end position="66"/>
    </location>
</feature>
<feature type="compositionally biased region" description="Basic and acidic residues" evidence="2">
    <location>
        <begin position="183"/>
        <end position="197"/>
    </location>
</feature>
<feature type="compositionally biased region" description="Low complexity" evidence="2">
    <location>
        <begin position="198"/>
        <end position="209"/>
    </location>
</feature>
<evidence type="ECO:0000255" key="1"/>
<evidence type="ECO:0000256" key="2">
    <source>
        <dbReference type="SAM" id="MobiDB-lite"/>
    </source>
</evidence>
<evidence type="ECO:0000305" key="3"/>
<dbReference type="EMBL" id="AE000516">
    <property type="protein sequence ID" value="AAK44740.1"/>
    <property type="molecule type" value="Genomic_DNA"/>
</dbReference>
<dbReference type="PIR" id="D70745">
    <property type="entry name" value="D70745"/>
</dbReference>
<dbReference type="RefSeq" id="WP_003402426.1">
    <property type="nucleotide sequence ID" value="NZ_KK341227.1"/>
</dbReference>
<dbReference type="SMR" id="P9WKU2"/>
<dbReference type="KEGG" id="mtc:MT0517"/>
<dbReference type="PATRIC" id="fig|83331.31.peg.547"/>
<dbReference type="HOGENOM" id="CLU_778061_0_0_11"/>
<dbReference type="Proteomes" id="UP000001020">
    <property type="component" value="Chromosome"/>
</dbReference>
<dbReference type="GO" id="GO:0005886">
    <property type="term" value="C:plasma membrane"/>
    <property type="evidence" value="ECO:0007669"/>
    <property type="project" value="UniProtKB-SubCell"/>
</dbReference>
<keyword id="KW-1003">Cell membrane</keyword>
<keyword id="KW-0472">Membrane</keyword>
<keyword id="KW-1185">Reference proteome</keyword>
<keyword id="KW-0812">Transmembrane</keyword>
<keyword id="KW-1133">Transmembrane helix</keyword>